<reference key="1">
    <citation type="submission" date="2008-10" db="EMBL/GenBank/DDBJ databases">
        <title>Genome sequence of Bacillus cereus G9842.</title>
        <authorList>
            <person name="Dodson R.J."/>
            <person name="Durkin A.S."/>
            <person name="Rosovitz M.J."/>
            <person name="Rasko D.A."/>
            <person name="Hoffmaster A."/>
            <person name="Ravel J."/>
            <person name="Sutton G."/>
        </authorList>
    </citation>
    <scope>NUCLEOTIDE SEQUENCE [LARGE SCALE GENOMIC DNA]</scope>
    <source>
        <strain>G9842</strain>
    </source>
</reference>
<organism>
    <name type="scientific">Bacillus cereus (strain G9842)</name>
    <dbReference type="NCBI Taxonomy" id="405531"/>
    <lineage>
        <taxon>Bacteria</taxon>
        <taxon>Bacillati</taxon>
        <taxon>Bacillota</taxon>
        <taxon>Bacilli</taxon>
        <taxon>Bacillales</taxon>
        <taxon>Bacillaceae</taxon>
        <taxon>Bacillus</taxon>
        <taxon>Bacillus cereus group</taxon>
    </lineage>
</organism>
<sequence length="235" mass="25675">MSVHIEAKQGEIAESILLPGDPLRAKYIAETFLEDVTCYNNVRGMLGFTGTYKGKRVSVQGTGMGVPSISIYVNELIQSYGVKNLIRVGTCGAIQKDVKVRDVIIAMTACTDSNMNRLTFPGFDFAPAANFDLLKKAYDAGTEKGLHVRVGNVLTADVFYRESMDMVKKLGDYGVLAVEMETTALYTLAAKYGVNALSVLTVSDHIFTGEETTSEERQTTFNEMIEIALDAAIQQ</sequence>
<feature type="chain" id="PRO_1000186174" description="Purine nucleoside phosphorylase DeoD-type">
    <location>
        <begin position="1"/>
        <end position="235"/>
    </location>
</feature>
<feature type="active site" description="Proton donor" evidence="2">
    <location>
        <position position="204"/>
    </location>
</feature>
<feature type="binding site" evidence="1">
    <location>
        <position position="4"/>
    </location>
    <ligand>
        <name>a purine D-ribonucleoside</name>
        <dbReference type="ChEBI" id="CHEBI:142355"/>
        <note>ligand shared between dimeric partners</note>
    </ligand>
</feature>
<feature type="binding site" description="in other chain" evidence="1">
    <location>
        <position position="20"/>
    </location>
    <ligand>
        <name>phosphate</name>
        <dbReference type="ChEBI" id="CHEBI:43474"/>
        <note>ligand shared between dimeric partners</note>
    </ligand>
</feature>
<feature type="binding site" description="in other chain" evidence="1">
    <location>
        <position position="24"/>
    </location>
    <ligand>
        <name>phosphate</name>
        <dbReference type="ChEBI" id="CHEBI:43474"/>
        <note>ligand shared between dimeric partners</note>
    </ligand>
</feature>
<feature type="binding site" evidence="1">
    <location>
        <position position="43"/>
    </location>
    <ligand>
        <name>phosphate</name>
        <dbReference type="ChEBI" id="CHEBI:43474"/>
        <note>ligand shared between dimeric partners</note>
    </ligand>
</feature>
<feature type="binding site" description="in other chain" evidence="1">
    <location>
        <begin position="87"/>
        <end position="90"/>
    </location>
    <ligand>
        <name>phosphate</name>
        <dbReference type="ChEBI" id="CHEBI:43474"/>
        <note>ligand shared between dimeric partners</note>
    </ligand>
</feature>
<feature type="binding site" description="in other chain" evidence="1">
    <location>
        <position position="162"/>
    </location>
    <ligand>
        <name>a purine D-ribonucleoside</name>
        <dbReference type="ChEBI" id="CHEBI:142355"/>
        <note>ligand shared between dimeric partners</note>
    </ligand>
</feature>
<feature type="binding site" description="in other chain" evidence="1">
    <location>
        <begin position="179"/>
        <end position="181"/>
    </location>
    <ligand>
        <name>a purine D-ribonucleoside</name>
        <dbReference type="ChEBI" id="CHEBI:142355"/>
        <note>ligand shared between dimeric partners</note>
    </ligand>
</feature>
<feature type="binding site" description="in other chain" evidence="1">
    <location>
        <begin position="203"/>
        <end position="204"/>
    </location>
    <ligand>
        <name>a purine D-ribonucleoside</name>
        <dbReference type="ChEBI" id="CHEBI:142355"/>
        <note>ligand shared between dimeric partners</note>
    </ligand>
</feature>
<feature type="site" description="Important for catalytic activity" evidence="2">
    <location>
        <position position="217"/>
    </location>
</feature>
<proteinExistence type="inferred from homology"/>
<dbReference type="EC" id="2.4.2.1" evidence="2"/>
<dbReference type="EMBL" id="CP001186">
    <property type="protein sequence ID" value="ACK96929.1"/>
    <property type="molecule type" value="Genomic_DNA"/>
</dbReference>
<dbReference type="RefSeq" id="WP_000110707.1">
    <property type="nucleotide sequence ID" value="NC_011772.1"/>
</dbReference>
<dbReference type="SMR" id="B7IP41"/>
<dbReference type="GeneID" id="93009578"/>
<dbReference type="KEGG" id="bcg:BCG9842_B3827"/>
<dbReference type="HOGENOM" id="CLU_068457_2_0_9"/>
<dbReference type="Proteomes" id="UP000006744">
    <property type="component" value="Chromosome"/>
</dbReference>
<dbReference type="GO" id="GO:0005829">
    <property type="term" value="C:cytosol"/>
    <property type="evidence" value="ECO:0007669"/>
    <property type="project" value="TreeGrafter"/>
</dbReference>
<dbReference type="GO" id="GO:0004731">
    <property type="term" value="F:purine-nucleoside phosphorylase activity"/>
    <property type="evidence" value="ECO:0007669"/>
    <property type="project" value="UniProtKB-UniRule"/>
</dbReference>
<dbReference type="GO" id="GO:0006152">
    <property type="term" value="P:purine nucleoside catabolic process"/>
    <property type="evidence" value="ECO:0007669"/>
    <property type="project" value="TreeGrafter"/>
</dbReference>
<dbReference type="CDD" id="cd09006">
    <property type="entry name" value="PNP_EcPNPI-like"/>
    <property type="match status" value="1"/>
</dbReference>
<dbReference type="Gene3D" id="3.40.50.1580">
    <property type="entry name" value="Nucleoside phosphorylase domain"/>
    <property type="match status" value="1"/>
</dbReference>
<dbReference type="HAMAP" id="MF_01627">
    <property type="entry name" value="Pur_nucleosid_phosp"/>
    <property type="match status" value="1"/>
</dbReference>
<dbReference type="InterPro" id="IPR004402">
    <property type="entry name" value="DeoD-type"/>
</dbReference>
<dbReference type="InterPro" id="IPR018016">
    <property type="entry name" value="Nucleoside_phosphorylase_CS"/>
</dbReference>
<dbReference type="InterPro" id="IPR000845">
    <property type="entry name" value="Nucleoside_phosphorylase_d"/>
</dbReference>
<dbReference type="InterPro" id="IPR035994">
    <property type="entry name" value="Nucleoside_phosphorylase_sf"/>
</dbReference>
<dbReference type="NCBIfam" id="TIGR00107">
    <property type="entry name" value="deoD"/>
    <property type="match status" value="1"/>
</dbReference>
<dbReference type="NCBIfam" id="NF004489">
    <property type="entry name" value="PRK05819.1"/>
    <property type="match status" value="1"/>
</dbReference>
<dbReference type="NCBIfam" id="NF009914">
    <property type="entry name" value="PRK13374.1"/>
    <property type="match status" value="1"/>
</dbReference>
<dbReference type="PANTHER" id="PTHR43691:SF11">
    <property type="entry name" value="FI09636P-RELATED"/>
    <property type="match status" value="1"/>
</dbReference>
<dbReference type="PANTHER" id="PTHR43691">
    <property type="entry name" value="URIDINE PHOSPHORYLASE"/>
    <property type="match status" value="1"/>
</dbReference>
<dbReference type="Pfam" id="PF01048">
    <property type="entry name" value="PNP_UDP_1"/>
    <property type="match status" value="1"/>
</dbReference>
<dbReference type="SUPFAM" id="SSF53167">
    <property type="entry name" value="Purine and uridine phosphorylases"/>
    <property type="match status" value="1"/>
</dbReference>
<dbReference type="PROSITE" id="PS01232">
    <property type="entry name" value="PNP_UDP_1"/>
    <property type="match status" value="1"/>
</dbReference>
<keyword id="KW-0328">Glycosyltransferase</keyword>
<keyword id="KW-0808">Transferase</keyword>
<protein>
    <recommendedName>
        <fullName evidence="2">Purine nucleoside phosphorylase DeoD-type</fullName>
        <shortName evidence="2">PNP</shortName>
        <ecNumber evidence="2">2.4.2.1</ecNumber>
    </recommendedName>
</protein>
<gene>
    <name evidence="2" type="primary">deoD</name>
    <name type="ordered locus">BCG9842_B3827</name>
</gene>
<accession>B7IP41</accession>
<evidence type="ECO:0000250" key="1">
    <source>
        <dbReference type="UniProtKB" id="P50389"/>
    </source>
</evidence>
<evidence type="ECO:0000255" key="2">
    <source>
        <dbReference type="HAMAP-Rule" id="MF_01627"/>
    </source>
</evidence>
<comment type="function">
    <text evidence="2">Catalyzes the reversible phosphorolytic breakdown of the N-glycosidic bond in the beta-(deoxy)ribonucleoside molecules, with the formation of the corresponding free purine bases and pentose-1-phosphate.</text>
</comment>
<comment type="catalytic activity">
    <reaction evidence="2">
        <text>a purine D-ribonucleoside + phosphate = a purine nucleobase + alpha-D-ribose 1-phosphate</text>
        <dbReference type="Rhea" id="RHEA:19805"/>
        <dbReference type="ChEBI" id="CHEBI:26386"/>
        <dbReference type="ChEBI" id="CHEBI:43474"/>
        <dbReference type="ChEBI" id="CHEBI:57720"/>
        <dbReference type="ChEBI" id="CHEBI:142355"/>
        <dbReference type="EC" id="2.4.2.1"/>
    </reaction>
</comment>
<comment type="catalytic activity">
    <reaction evidence="2">
        <text>a purine 2'-deoxy-D-ribonucleoside + phosphate = a purine nucleobase + 2-deoxy-alpha-D-ribose 1-phosphate</text>
        <dbReference type="Rhea" id="RHEA:36431"/>
        <dbReference type="ChEBI" id="CHEBI:26386"/>
        <dbReference type="ChEBI" id="CHEBI:43474"/>
        <dbReference type="ChEBI" id="CHEBI:57259"/>
        <dbReference type="ChEBI" id="CHEBI:142361"/>
        <dbReference type="EC" id="2.4.2.1"/>
    </reaction>
</comment>
<comment type="subunit">
    <text evidence="2">Homohexamer; trimer of homodimers.</text>
</comment>
<comment type="similarity">
    <text evidence="2">Belongs to the PNP/UDP phosphorylase family.</text>
</comment>
<name>DEOD_BACC2</name>